<sequence>MRIAILSRNENLYSTSRLKAAGEARGHQVDVIDTLHCDIDIASNNPKIRYMGEELPQYDAVIPRIGASITFYGTAVVRQFEMMGTFCINESVAISRSRDKLRSLQLLSRKGIGLPKTGFASRPDKIQDLIKNVGGAPLVIKLLEGTQGIGVVLAETNKAAESVIEAFMGLKANILVQEFIEEANGADIRCFVVGNKVIAAMKRQAGEGEFRSNLHRGGTAQLVKLTKEERATAINAAKIMGLNLCGVDILQSKNGPVVMEVNSSPGLEGIEKSTGKDVADMIFEFIEKNAKPNANRTRGKG</sequence>
<name>RIMK_VIBA3</name>
<protein>
    <recommendedName>
        <fullName evidence="1">Probable alpha-L-glutamate ligase</fullName>
        <ecNumber evidence="1">6.3.2.-</ecNumber>
    </recommendedName>
</protein>
<accession>B7VSX1</accession>
<proteinExistence type="inferred from homology"/>
<keyword id="KW-0067">ATP-binding</keyword>
<keyword id="KW-0436">Ligase</keyword>
<keyword id="KW-0460">Magnesium</keyword>
<keyword id="KW-0464">Manganese</keyword>
<keyword id="KW-0479">Metal-binding</keyword>
<keyword id="KW-0547">Nucleotide-binding</keyword>
<keyword id="KW-0648">Protein biosynthesis</keyword>
<dbReference type="EC" id="6.3.2.-" evidence="1"/>
<dbReference type="EMBL" id="FM954973">
    <property type="protein sequence ID" value="CAV27192.1"/>
    <property type="molecule type" value="Genomic_DNA"/>
</dbReference>
<dbReference type="SMR" id="B7VSX1"/>
<dbReference type="STRING" id="575788.VS_II1207"/>
<dbReference type="KEGG" id="vsp:VS_II1207"/>
<dbReference type="eggNOG" id="COG0189">
    <property type="taxonomic scope" value="Bacteria"/>
</dbReference>
<dbReference type="HOGENOM" id="CLU_054353_0_1_6"/>
<dbReference type="Proteomes" id="UP000009100">
    <property type="component" value="Chromosome 2"/>
</dbReference>
<dbReference type="GO" id="GO:0005737">
    <property type="term" value="C:cytoplasm"/>
    <property type="evidence" value="ECO:0007669"/>
    <property type="project" value="TreeGrafter"/>
</dbReference>
<dbReference type="GO" id="GO:0005524">
    <property type="term" value="F:ATP binding"/>
    <property type="evidence" value="ECO:0007669"/>
    <property type="project" value="UniProtKB-UniRule"/>
</dbReference>
<dbReference type="GO" id="GO:0046872">
    <property type="term" value="F:metal ion binding"/>
    <property type="evidence" value="ECO:0007669"/>
    <property type="project" value="UniProtKB-KW"/>
</dbReference>
<dbReference type="GO" id="GO:0018169">
    <property type="term" value="F:ribosomal S6-glutamic acid ligase activity"/>
    <property type="evidence" value="ECO:0007669"/>
    <property type="project" value="TreeGrafter"/>
</dbReference>
<dbReference type="GO" id="GO:0036211">
    <property type="term" value="P:protein modification process"/>
    <property type="evidence" value="ECO:0007669"/>
    <property type="project" value="InterPro"/>
</dbReference>
<dbReference type="GO" id="GO:0009432">
    <property type="term" value="P:SOS response"/>
    <property type="evidence" value="ECO:0007669"/>
    <property type="project" value="TreeGrafter"/>
</dbReference>
<dbReference type="GO" id="GO:0006412">
    <property type="term" value="P:translation"/>
    <property type="evidence" value="ECO:0007669"/>
    <property type="project" value="UniProtKB-KW"/>
</dbReference>
<dbReference type="FunFam" id="3.30.470.20:FF:000058">
    <property type="entry name" value="Alpha-aminoadipate--LysW ligase LysX protein"/>
    <property type="match status" value="1"/>
</dbReference>
<dbReference type="FunFam" id="3.40.50.20:FF:000004">
    <property type="entry name" value="Probable alpha-L-glutamate ligase"/>
    <property type="match status" value="1"/>
</dbReference>
<dbReference type="FunFam" id="3.30.1490.20:FF:000005">
    <property type="entry name" value="Probable alpha-L-glutamate ligase 1"/>
    <property type="match status" value="1"/>
</dbReference>
<dbReference type="Gene3D" id="3.40.50.20">
    <property type="match status" value="1"/>
</dbReference>
<dbReference type="Gene3D" id="3.30.1490.20">
    <property type="entry name" value="ATP-grasp fold, A domain"/>
    <property type="match status" value="1"/>
</dbReference>
<dbReference type="Gene3D" id="3.30.470.20">
    <property type="entry name" value="ATP-grasp fold, B domain"/>
    <property type="match status" value="1"/>
</dbReference>
<dbReference type="HAMAP" id="MF_01552">
    <property type="entry name" value="RimK"/>
    <property type="match status" value="1"/>
</dbReference>
<dbReference type="InterPro" id="IPR011761">
    <property type="entry name" value="ATP-grasp"/>
</dbReference>
<dbReference type="InterPro" id="IPR013651">
    <property type="entry name" value="ATP-grasp_RimK-type"/>
</dbReference>
<dbReference type="InterPro" id="IPR013815">
    <property type="entry name" value="ATP_grasp_subdomain_1"/>
</dbReference>
<dbReference type="InterPro" id="IPR023533">
    <property type="entry name" value="RimK"/>
</dbReference>
<dbReference type="InterPro" id="IPR041107">
    <property type="entry name" value="Rimk_N"/>
</dbReference>
<dbReference type="InterPro" id="IPR004666">
    <property type="entry name" value="Rp_bS6_RimK/Lys_biosynth_LsyX"/>
</dbReference>
<dbReference type="NCBIfam" id="NF007764">
    <property type="entry name" value="PRK10446.1"/>
    <property type="match status" value="1"/>
</dbReference>
<dbReference type="NCBIfam" id="TIGR00768">
    <property type="entry name" value="rimK_fam"/>
    <property type="match status" value="1"/>
</dbReference>
<dbReference type="PANTHER" id="PTHR21621:SF7">
    <property type="entry name" value="RIBOSOMAL PROTEIN BS6--L-GLUTAMATE LIGASE"/>
    <property type="match status" value="1"/>
</dbReference>
<dbReference type="PANTHER" id="PTHR21621">
    <property type="entry name" value="RIBOSOMAL PROTEIN S6 MODIFICATION PROTEIN"/>
    <property type="match status" value="1"/>
</dbReference>
<dbReference type="Pfam" id="PF08443">
    <property type="entry name" value="RimK"/>
    <property type="match status" value="1"/>
</dbReference>
<dbReference type="Pfam" id="PF18030">
    <property type="entry name" value="Rimk_N"/>
    <property type="match status" value="1"/>
</dbReference>
<dbReference type="SUPFAM" id="SSF56059">
    <property type="entry name" value="Glutathione synthetase ATP-binding domain-like"/>
    <property type="match status" value="1"/>
</dbReference>
<dbReference type="PROSITE" id="PS50975">
    <property type="entry name" value="ATP_GRASP"/>
    <property type="match status" value="1"/>
</dbReference>
<feature type="chain" id="PRO_1000185329" description="Probable alpha-L-glutamate ligase">
    <location>
        <begin position="1"/>
        <end position="301"/>
    </location>
</feature>
<feature type="domain" description="ATP-grasp" evidence="1">
    <location>
        <begin position="104"/>
        <end position="287"/>
    </location>
</feature>
<feature type="binding site" evidence="1">
    <location>
        <position position="141"/>
    </location>
    <ligand>
        <name>ATP</name>
        <dbReference type="ChEBI" id="CHEBI:30616"/>
    </ligand>
</feature>
<feature type="binding site" evidence="1">
    <location>
        <begin position="178"/>
        <end position="179"/>
    </location>
    <ligand>
        <name>ATP</name>
        <dbReference type="ChEBI" id="CHEBI:30616"/>
    </ligand>
</feature>
<feature type="binding site" evidence="1">
    <location>
        <position position="187"/>
    </location>
    <ligand>
        <name>ATP</name>
        <dbReference type="ChEBI" id="CHEBI:30616"/>
    </ligand>
</feature>
<feature type="binding site" evidence="1">
    <location>
        <begin position="211"/>
        <end position="213"/>
    </location>
    <ligand>
        <name>ATP</name>
        <dbReference type="ChEBI" id="CHEBI:30616"/>
    </ligand>
</feature>
<feature type="binding site" evidence="1">
    <location>
        <position position="248"/>
    </location>
    <ligand>
        <name>Mg(2+)</name>
        <dbReference type="ChEBI" id="CHEBI:18420"/>
        <label>1</label>
    </ligand>
</feature>
<feature type="binding site" evidence="1">
    <location>
        <position position="248"/>
    </location>
    <ligand>
        <name>Mn(2+)</name>
        <dbReference type="ChEBI" id="CHEBI:29035"/>
        <label>1</label>
    </ligand>
</feature>
<feature type="binding site" evidence="1">
    <location>
        <position position="260"/>
    </location>
    <ligand>
        <name>Mg(2+)</name>
        <dbReference type="ChEBI" id="CHEBI:18420"/>
        <label>1</label>
    </ligand>
</feature>
<feature type="binding site" evidence="1">
    <location>
        <position position="260"/>
    </location>
    <ligand>
        <name>Mg(2+)</name>
        <dbReference type="ChEBI" id="CHEBI:18420"/>
        <label>2</label>
    </ligand>
</feature>
<feature type="binding site" evidence="1">
    <location>
        <position position="260"/>
    </location>
    <ligand>
        <name>Mn(2+)</name>
        <dbReference type="ChEBI" id="CHEBI:29035"/>
        <label>1</label>
    </ligand>
</feature>
<feature type="binding site" evidence="1">
    <location>
        <position position="260"/>
    </location>
    <ligand>
        <name>Mn(2+)</name>
        <dbReference type="ChEBI" id="CHEBI:29035"/>
        <label>2</label>
    </ligand>
</feature>
<feature type="binding site" evidence="1">
    <location>
        <position position="262"/>
    </location>
    <ligand>
        <name>Mg(2+)</name>
        <dbReference type="ChEBI" id="CHEBI:18420"/>
        <label>2</label>
    </ligand>
</feature>
<feature type="binding site" evidence="1">
    <location>
        <position position="262"/>
    </location>
    <ligand>
        <name>Mn(2+)</name>
        <dbReference type="ChEBI" id="CHEBI:29035"/>
        <label>2</label>
    </ligand>
</feature>
<reference key="1">
    <citation type="submission" date="2009-02" db="EMBL/GenBank/DDBJ databases">
        <title>Vibrio splendidus str. LGP32 complete genome.</title>
        <authorList>
            <person name="Mazel D."/>
            <person name="Le Roux F."/>
        </authorList>
    </citation>
    <scope>NUCLEOTIDE SEQUENCE [LARGE SCALE GENOMIC DNA]</scope>
    <source>
        <strain>LGP32</strain>
    </source>
</reference>
<evidence type="ECO:0000255" key="1">
    <source>
        <dbReference type="HAMAP-Rule" id="MF_01552"/>
    </source>
</evidence>
<organism>
    <name type="scientific">Vibrio atlanticus (strain LGP32)</name>
    <name type="common">Vibrio splendidus (strain Mel32)</name>
    <dbReference type="NCBI Taxonomy" id="575788"/>
    <lineage>
        <taxon>Bacteria</taxon>
        <taxon>Pseudomonadati</taxon>
        <taxon>Pseudomonadota</taxon>
        <taxon>Gammaproteobacteria</taxon>
        <taxon>Vibrionales</taxon>
        <taxon>Vibrionaceae</taxon>
        <taxon>Vibrio</taxon>
    </lineage>
</organism>
<comment type="cofactor">
    <cofactor evidence="1">
        <name>Mg(2+)</name>
        <dbReference type="ChEBI" id="CHEBI:18420"/>
    </cofactor>
    <cofactor evidence="1">
        <name>Mn(2+)</name>
        <dbReference type="ChEBI" id="CHEBI:29035"/>
    </cofactor>
    <text evidence="1">Binds 2 magnesium or manganese ions per subunit.</text>
</comment>
<comment type="similarity">
    <text evidence="1">Belongs to the RimK family.</text>
</comment>
<gene>
    <name evidence="1" type="primary">rimK</name>
    <name type="ordered locus">VS_II1207</name>
</gene>